<comment type="function">
    <text evidence="1">NAD-binding protein involved in the addition of a carboxymethylaminomethyl (cmnm) group at the wobble position (U34) of certain tRNAs, forming tRNA-cmnm(5)s(2)U34.</text>
</comment>
<comment type="cofactor">
    <cofactor evidence="1">
        <name>FAD</name>
        <dbReference type="ChEBI" id="CHEBI:57692"/>
    </cofactor>
</comment>
<comment type="subunit">
    <text evidence="1">Homodimer. Heterotetramer of two MnmE and two MnmG subunits.</text>
</comment>
<comment type="subcellular location">
    <subcellularLocation>
        <location evidence="1">Cytoplasm</location>
    </subcellularLocation>
</comment>
<comment type="similarity">
    <text evidence="1">Belongs to the MnmG family.</text>
</comment>
<name>MNMG_ECOUT</name>
<dbReference type="EMBL" id="CP000243">
    <property type="protein sequence ID" value="ABE09723.1"/>
    <property type="molecule type" value="Genomic_DNA"/>
</dbReference>
<dbReference type="RefSeq" id="WP_000499800.1">
    <property type="nucleotide sequence ID" value="NZ_CP064825.1"/>
</dbReference>
<dbReference type="SMR" id="Q1R4J1"/>
<dbReference type="KEGG" id="eci:UTI89_C4296"/>
<dbReference type="HOGENOM" id="CLU_007831_2_2_6"/>
<dbReference type="Proteomes" id="UP000001952">
    <property type="component" value="Chromosome"/>
</dbReference>
<dbReference type="GO" id="GO:0005829">
    <property type="term" value="C:cytosol"/>
    <property type="evidence" value="ECO:0007669"/>
    <property type="project" value="TreeGrafter"/>
</dbReference>
<dbReference type="GO" id="GO:0050660">
    <property type="term" value="F:flavin adenine dinucleotide binding"/>
    <property type="evidence" value="ECO:0007669"/>
    <property type="project" value="UniProtKB-UniRule"/>
</dbReference>
<dbReference type="GO" id="GO:0030488">
    <property type="term" value="P:tRNA methylation"/>
    <property type="evidence" value="ECO:0007669"/>
    <property type="project" value="TreeGrafter"/>
</dbReference>
<dbReference type="GO" id="GO:0002098">
    <property type="term" value="P:tRNA wobble uridine modification"/>
    <property type="evidence" value="ECO:0007669"/>
    <property type="project" value="InterPro"/>
</dbReference>
<dbReference type="FunFam" id="1.10.10.1800:FF:000001">
    <property type="entry name" value="tRNA uridine 5-carboxymethylaminomethyl modification enzyme MnmG"/>
    <property type="match status" value="1"/>
</dbReference>
<dbReference type="FunFam" id="1.10.150.570:FF:000001">
    <property type="entry name" value="tRNA uridine 5-carboxymethylaminomethyl modification enzyme MnmG"/>
    <property type="match status" value="1"/>
</dbReference>
<dbReference type="FunFam" id="3.50.50.60:FF:000002">
    <property type="entry name" value="tRNA uridine 5-carboxymethylaminomethyl modification enzyme MnmG"/>
    <property type="match status" value="1"/>
</dbReference>
<dbReference type="FunFam" id="3.50.50.60:FF:000010">
    <property type="entry name" value="tRNA uridine 5-carboxymethylaminomethyl modification enzyme MnmG"/>
    <property type="match status" value="1"/>
</dbReference>
<dbReference type="Gene3D" id="3.50.50.60">
    <property type="entry name" value="FAD/NAD(P)-binding domain"/>
    <property type="match status" value="2"/>
</dbReference>
<dbReference type="Gene3D" id="1.10.150.570">
    <property type="entry name" value="GidA associated domain, C-terminal subdomain"/>
    <property type="match status" value="1"/>
</dbReference>
<dbReference type="Gene3D" id="1.10.10.1800">
    <property type="entry name" value="tRNA uridine 5-carboxymethylaminomethyl modification enzyme MnmG/GidA"/>
    <property type="match status" value="1"/>
</dbReference>
<dbReference type="HAMAP" id="MF_00129">
    <property type="entry name" value="MnmG_GidA"/>
    <property type="match status" value="1"/>
</dbReference>
<dbReference type="InterPro" id="IPR036188">
    <property type="entry name" value="FAD/NAD-bd_sf"/>
</dbReference>
<dbReference type="InterPro" id="IPR049312">
    <property type="entry name" value="GIDA_C_N"/>
</dbReference>
<dbReference type="InterPro" id="IPR004416">
    <property type="entry name" value="MnmG"/>
</dbReference>
<dbReference type="InterPro" id="IPR002218">
    <property type="entry name" value="MnmG-rel"/>
</dbReference>
<dbReference type="InterPro" id="IPR020595">
    <property type="entry name" value="MnmG-rel_CS"/>
</dbReference>
<dbReference type="InterPro" id="IPR026904">
    <property type="entry name" value="MnmG_C"/>
</dbReference>
<dbReference type="InterPro" id="IPR047001">
    <property type="entry name" value="MnmG_C_subdom"/>
</dbReference>
<dbReference type="InterPro" id="IPR044920">
    <property type="entry name" value="MnmG_C_subdom_sf"/>
</dbReference>
<dbReference type="InterPro" id="IPR040131">
    <property type="entry name" value="MnmG_N"/>
</dbReference>
<dbReference type="NCBIfam" id="TIGR00136">
    <property type="entry name" value="mnmG_gidA"/>
    <property type="match status" value="1"/>
</dbReference>
<dbReference type="PANTHER" id="PTHR11806">
    <property type="entry name" value="GLUCOSE INHIBITED DIVISION PROTEIN A"/>
    <property type="match status" value="1"/>
</dbReference>
<dbReference type="PANTHER" id="PTHR11806:SF0">
    <property type="entry name" value="PROTEIN MTO1 HOMOLOG, MITOCHONDRIAL"/>
    <property type="match status" value="1"/>
</dbReference>
<dbReference type="Pfam" id="PF01134">
    <property type="entry name" value="GIDA"/>
    <property type="match status" value="1"/>
</dbReference>
<dbReference type="Pfam" id="PF21680">
    <property type="entry name" value="GIDA_C_1st"/>
    <property type="match status" value="1"/>
</dbReference>
<dbReference type="Pfam" id="PF13932">
    <property type="entry name" value="SAM_GIDA_C"/>
    <property type="match status" value="1"/>
</dbReference>
<dbReference type="SMART" id="SM01228">
    <property type="entry name" value="GIDA_assoc_3"/>
    <property type="match status" value="1"/>
</dbReference>
<dbReference type="SUPFAM" id="SSF51905">
    <property type="entry name" value="FAD/NAD(P)-binding domain"/>
    <property type="match status" value="1"/>
</dbReference>
<dbReference type="PROSITE" id="PS01280">
    <property type="entry name" value="GIDA_1"/>
    <property type="match status" value="1"/>
</dbReference>
<dbReference type="PROSITE" id="PS01281">
    <property type="entry name" value="GIDA_2"/>
    <property type="match status" value="1"/>
</dbReference>
<sequence length="629" mass="69535">MFYPDPFDVIIIGGGHAGTEAAMAAARMGQQTLLLTHNIDTLGQMSCNPAIGGIGKGHLVKEVDALGGLMAKAIDQAGIQFRILNASKGPAVRATRAQADRVLYRQAVRTALENQPNLMIFQQAVEDLIVENDRVVGAVTQMGLKFRAKAVVLTVGTFLDGKIHIGLDNYSGGRAGDPPSIPLSRRLRELPLRVGRLKTGTPPRIDARTIDFSVLAQQHGDNPMPVFSFMGNASQHPQQVPCYITHTNEKTHDVIRSNLDRSPMYAGVIEGVGPRYCPSIEDKVMRFAERNQHQIFLEPEGLTSNEIYPNGISTSLPFDVQMQIVRSMQGMENAKIVRPGYAIEYDFFDPRDLKPTLESKFIQGLFFAGQINGTTGYEEAAAQGLLAGLNAARLSADKEGWAPARSQAYLGVLVDDLCTLGTKEPYRMFTSRAEYRLMLREDNADLRLTEIGRELGLVDDERWARFNEKLENIERERQRLKSTWVTPSAEAAAEVNAHLTAPLSREASGEDLLRRPEMTYEKLTTLTPFAPALTDEQAAEQVEIQVKYEGYIARQQDEIEKQLRNENTLLPATLDYRQVSGLSNEVIAKLNDHKPASIGQASRISGVTPAAISILLVWLKKQGMLRRSA</sequence>
<gene>
    <name evidence="1" type="primary">mnmG</name>
    <name evidence="1" type="synonym">gidA</name>
    <name type="ordered locus">UTI89_C4296</name>
</gene>
<organism>
    <name type="scientific">Escherichia coli (strain UTI89 / UPEC)</name>
    <dbReference type="NCBI Taxonomy" id="364106"/>
    <lineage>
        <taxon>Bacteria</taxon>
        <taxon>Pseudomonadati</taxon>
        <taxon>Pseudomonadota</taxon>
        <taxon>Gammaproteobacteria</taxon>
        <taxon>Enterobacterales</taxon>
        <taxon>Enterobacteriaceae</taxon>
        <taxon>Escherichia</taxon>
    </lineage>
</organism>
<proteinExistence type="inferred from homology"/>
<accession>Q1R4J1</accession>
<feature type="chain" id="PRO_1000016594" description="tRNA uridine 5-carboxymethylaminomethyl modification enzyme MnmG">
    <location>
        <begin position="1"/>
        <end position="629"/>
    </location>
</feature>
<feature type="binding site" evidence="1">
    <location>
        <begin position="13"/>
        <end position="18"/>
    </location>
    <ligand>
        <name>FAD</name>
        <dbReference type="ChEBI" id="CHEBI:57692"/>
    </ligand>
</feature>
<feature type="binding site" evidence="1">
    <location>
        <position position="125"/>
    </location>
    <ligand>
        <name>FAD</name>
        <dbReference type="ChEBI" id="CHEBI:57692"/>
    </ligand>
</feature>
<feature type="binding site" evidence="1">
    <location>
        <position position="180"/>
    </location>
    <ligand>
        <name>FAD</name>
        <dbReference type="ChEBI" id="CHEBI:57692"/>
    </ligand>
</feature>
<feature type="binding site" evidence="1">
    <location>
        <begin position="273"/>
        <end position="287"/>
    </location>
    <ligand>
        <name>NAD(+)</name>
        <dbReference type="ChEBI" id="CHEBI:57540"/>
    </ligand>
</feature>
<feature type="binding site" evidence="1">
    <location>
        <position position="370"/>
    </location>
    <ligand>
        <name>FAD</name>
        <dbReference type="ChEBI" id="CHEBI:57692"/>
    </ligand>
</feature>
<keyword id="KW-0963">Cytoplasm</keyword>
<keyword id="KW-0274">FAD</keyword>
<keyword id="KW-0285">Flavoprotein</keyword>
<keyword id="KW-0520">NAD</keyword>
<keyword id="KW-0819">tRNA processing</keyword>
<evidence type="ECO:0000255" key="1">
    <source>
        <dbReference type="HAMAP-Rule" id="MF_00129"/>
    </source>
</evidence>
<reference key="1">
    <citation type="journal article" date="2006" name="Proc. Natl. Acad. Sci. U.S.A.">
        <title>Identification of genes subject to positive selection in uropathogenic strains of Escherichia coli: a comparative genomics approach.</title>
        <authorList>
            <person name="Chen S.L."/>
            <person name="Hung C.-S."/>
            <person name="Xu J."/>
            <person name="Reigstad C.S."/>
            <person name="Magrini V."/>
            <person name="Sabo A."/>
            <person name="Blasiar D."/>
            <person name="Bieri T."/>
            <person name="Meyer R.R."/>
            <person name="Ozersky P."/>
            <person name="Armstrong J.R."/>
            <person name="Fulton R.S."/>
            <person name="Latreille J.P."/>
            <person name="Spieth J."/>
            <person name="Hooton T.M."/>
            <person name="Mardis E.R."/>
            <person name="Hultgren S.J."/>
            <person name="Gordon J.I."/>
        </authorList>
    </citation>
    <scope>NUCLEOTIDE SEQUENCE [LARGE SCALE GENOMIC DNA]</scope>
    <source>
        <strain>UTI89 / UPEC</strain>
    </source>
</reference>
<protein>
    <recommendedName>
        <fullName evidence="1">tRNA uridine 5-carboxymethylaminomethyl modification enzyme MnmG</fullName>
    </recommendedName>
    <alternativeName>
        <fullName evidence="1">Glucose-inhibited division protein A</fullName>
    </alternativeName>
</protein>